<keyword id="KW-0030">Aminoacyl-tRNA synthetase</keyword>
<keyword id="KW-0067">ATP-binding</keyword>
<keyword id="KW-0963">Cytoplasm</keyword>
<keyword id="KW-0436">Ligase</keyword>
<keyword id="KW-0547">Nucleotide-binding</keyword>
<keyword id="KW-0648">Protein biosynthesis</keyword>
<keyword id="KW-1185">Reference proteome</keyword>
<name>SYIC_ENCCU</name>
<sequence>MYRKNANFVECEEEVLEYWRRNKSFERSCERSRGREKFTFYDGPPFATGLPHYGHLLSGTIKDTVTRFFYQQGYDVDRRFGWDCHGLPVEYEIDKKLGISSRAEVLEMGIGKYNAECRGIVMKYSSEWEAVVERLGRWVSFRDGYRTMDMTFMESVWNIFKELFSRGLIYRGFRVMPFSTACSTPLSNFESNQNYKDVSDPSVLIAFPLLKPLGGYMLSLVAWTTTPWTLPSNCGLAVNPGFLYGVFEHKEKFYLMHVDRIGEYFKDARILQRVSGRELEGLEYEQPFDYFEEYRKKGFFRVLASGFVTDTDGTGVVHCAPGFGECDYNAFVEKGLIRENDLVPCPVDENGRYTSEVRRYAGRYVKDCDKAILSDIRDKVLMNQRIVHKYPFCWRSDTPLLYKLVPNWFVKVKDHVDSLLRNNEKINWVPPDIKYKRFHNWLENARDWSISRNRFWGTPIPLWVTEDYSDMICIGSVGELEELSGRKIDDIHREFIDGIVIHRNGREYRRVEEVLDCWFESGSMPYAQDHWPFCKESGVDLGSLSVSGGEERNKKLVKENFPAHFIGEGLDQTRGWFYTLHVISSLLFGQPAFLNVVVNGIVLAEDGRKMSKRLRNYPDPSHIFNTYGADSLRMYLISSPVVEAENLKFSEGGVKEVLKTLIIPWYNSLGFYLENRDVEPDGRSLPMDGWITASFDNFAWSLTRKMRKYELSSVLTLALRFIDDLSNWYIRMYRKEIRAGHHAVLGEILKKFSIVMGPFTPFFSEYSYQSLNPGESVHFQEYPVCKNGTHPFEMAKSIIAAVRRLRETNSISLKTPLKSATLMSSSSLYEGIKDYIDAIKTECNVLELLYKEEDRSMFDITVKPNFLSLKKDKATMKKKMKVIQGLTGDQAYSLLSSPLVVDGLEILRDDVLIVKKIRCEGIAQEFGDFSIIIDNTLDEGMVKMKIAREFHSYIQKLRKSAGLRVGDDVVVDIQCPDLKGIVSKYFDISFGSLGALSGRGEYEFDGTLYPVSLYKKL</sequence>
<protein>
    <recommendedName>
        <fullName>Probable isoleucine--tRNA ligase, cytoplasmic</fullName>
        <ecNumber>6.1.1.5</ecNumber>
    </recommendedName>
    <alternativeName>
        <fullName>Isoleucyl-tRNA synthetase</fullName>
        <shortName>IleRS</shortName>
    </alternativeName>
</protein>
<comment type="catalytic activity">
    <reaction>
        <text>tRNA(Ile) + L-isoleucine + ATP = L-isoleucyl-tRNA(Ile) + AMP + diphosphate</text>
        <dbReference type="Rhea" id="RHEA:11060"/>
        <dbReference type="Rhea" id="RHEA-COMP:9666"/>
        <dbReference type="Rhea" id="RHEA-COMP:9695"/>
        <dbReference type="ChEBI" id="CHEBI:30616"/>
        <dbReference type="ChEBI" id="CHEBI:33019"/>
        <dbReference type="ChEBI" id="CHEBI:58045"/>
        <dbReference type="ChEBI" id="CHEBI:78442"/>
        <dbReference type="ChEBI" id="CHEBI:78528"/>
        <dbReference type="ChEBI" id="CHEBI:456215"/>
        <dbReference type="EC" id="6.1.1.5"/>
    </reaction>
</comment>
<comment type="subcellular location">
    <subcellularLocation>
        <location evidence="1">Cytoplasm</location>
    </subcellularLocation>
</comment>
<comment type="similarity">
    <text evidence="2">Belongs to the class-I aminoacyl-tRNA synthetase family.</text>
</comment>
<reference key="1">
    <citation type="journal article" date="2001" name="Nature">
        <title>Genome sequence and gene compaction of the eukaryote parasite Encephalitozoon cuniculi.</title>
        <authorList>
            <person name="Katinka M.D."/>
            <person name="Duprat S."/>
            <person name="Cornillot E."/>
            <person name="Metenier G."/>
            <person name="Thomarat F."/>
            <person name="Prensier G."/>
            <person name="Barbe V."/>
            <person name="Peyretaillade E."/>
            <person name="Brottier P."/>
            <person name="Wincker P."/>
            <person name="Delbac F."/>
            <person name="El Alaoui H."/>
            <person name="Peyret P."/>
            <person name="Saurin W."/>
            <person name="Gouy M."/>
            <person name="Weissenbach J."/>
            <person name="Vivares C.P."/>
        </authorList>
    </citation>
    <scope>NUCLEOTIDE SEQUENCE [LARGE SCALE GENOMIC DNA]</scope>
    <source>
        <strain>GB-M1</strain>
    </source>
</reference>
<dbReference type="EC" id="6.1.1.5"/>
<dbReference type="EMBL" id="AL590450">
    <property type="protein sequence ID" value="CAD26020.1"/>
    <property type="molecule type" value="Genomic_DNA"/>
</dbReference>
<dbReference type="RefSeq" id="NP_586416.1">
    <property type="nucleotide sequence ID" value="NM_001042249.1"/>
</dbReference>
<dbReference type="SMR" id="Q8SQV6"/>
<dbReference type="FunCoup" id="Q8SQV6">
    <property type="interactions" value="265"/>
</dbReference>
<dbReference type="STRING" id="284813.Q8SQV6"/>
<dbReference type="GeneID" id="860069"/>
<dbReference type="KEGG" id="ecu:ECU11_1100"/>
<dbReference type="VEuPathDB" id="MicrosporidiaDB:ECU11_1100"/>
<dbReference type="HOGENOM" id="CLU_001493_1_1_1"/>
<dbReference type="InParanoid" id="Q8SQV6"/>
<dbReference type="OMA" id="EIIVIHK"/>
<dbReference type="OrthoDB" id="1706657at2759"/>
<dbReference type="Proteomes" id="UP000000819">
    <property type="component" value="Chromosome XI"/>
</dbReference>
<dbReference type="GO" id="GO:0005737">
    <property type="term" value="C:cytoplasm"/>
    <property type="evidence" value="ECO:0007669"/>
    <property type="project" value="UniProtKB-SubCell"/>
</dbReference>
<dbReference type="GO" id="GO:0002161">
    <property type="term" value="F:aminoacyl-tRNA deacylase activity"/>
    <property type="evidence" value="ECO:0007669"/>
    <property type="project" value="InterPro"/>
</dbReference>
<dbReference type="GO" id="GO:0005524">
    <property type="term" value="F:ATP binding"/>
    <property type="evidence" value="ECO:0007669"/>
    <property type="project" value="UniProtKB-KW"/>
</dbReference>
<dbReference type="GO" id="GO:0004822">
    <property type="term" value="F:isoleucine-tRNA ligase activity"/>
    <property type="evidence" value="ECO:0007669"/>
    <property type="project" value="UniProtKB-EC"/>
</dbReference>
<dbReference type="GO" id="GO:0000049">
    <property type="term" value="F:tRNA binding"/>
    <property type="evidence" value="ECO:0007669"/>
    <property type="project" value="InterPro"/>
</dbReference>
<dbReference type="GO" id="GO:0006428">
    <property type="term" value="P:isoleucyl-tRNA aminoacylation"/>
    <property type="evidence" value="ECO:0007669"/>
    <property type="project" value="InterPro"/>
</dbReference>
<dbReference type="CDD" id="cd07961">
    <property type="entry name" value="Anticodon_Ia_Ile_ABEc"/>
    <property type="match status" value="1"/>
</dbReference>
<dbReference type="CDD" id="cd00818">
    <property type="entry name" value="IleRS_core"/>
    <property type="match status" value="1"/>
</dbReference>
<dbReference type="FunFam" id="3.40.50.620:FF:000023">
    <property type="entry name" value="Isoleucyl-tRNA synthetase,cytoplasmic"/>
    <property type="match status" value="1"/>
</dbReference>
<dbReference type="Gene3D" id="3.40.50.620">
    <property type="entry name" value="HUPs"/>
    <property type="match status" value="2"/>
</dbReference>
<dbReference type="Gene3D" id="1.10.730.10">
    <property type="entry name" value="Isoleucyl-tRNA Synthetase, Domain 1"/>
    <property type="match status" value="1"/>
</dbReference>
<dbReference type="InterPro" id="IPR001412">
    <property type="entry name" value="aa-tRNA-synth_I_CS"/>
</dbReference>
<dbReference type="InterPro" id="IPR002300">
    <property type="entry name" value="aa-tRNA-synth_Ia"/>
</dbReference>
<dbReference type="InterPro" id="IPR033709">
    <property type="entry name" value="Anticodon_Ile_ABEc"/>
</dbReference>
<dbReference type="InterPro" id="IPR002301">
    <property type="entry name" value="Ile-tRNA-ligase"/>
</dbReference>
<dbReference type="InterPro" id="IPR023586">
    <property type="entry name" value="Ile-tRNA-ligase_type2"/>
</dbReference>
<dbReference type="InterPro" id="IPR013155">
    <property type="entry name" value="M/V/L/I-tRNA-synth_anticd-bd"/>
</dbReference>
<dbReference type="InterPro" id="IPR014729">
    <property type="entry name" value="Rossmann-like_a/b/a_fold"/>
</dbReference>
<dbReference type="InterPro" id="IPR009080">
    <property type="entry name" value="tRNAsynth_Ia_anticodon-bd"/>
</dbReference>
<dbReference type="InterPro" id="IPR009008">
    <property type="entry name" value="Val/Leu/Ile-tRNA-synth_edit"/>
</dbReference>
<dbReference type="NCBIfam" id="TIGR00392">
    <property type="entry name" value="ileS"/>
    <property type="match status" value="1"/>
</dbReference>
<dbReference type="PANTHER" id="PTHR42780:SF1">
    <property type="entry name" value="ISOLEUCINE--TRNA LIGASE, CYTOPLASMIC"/>
    <property type="match status" value="1"/>
</dbReference>
<dbReference type="PANTHER" id="PTHR42780">
    <property type="entry name" value="SOLEUCYL-TRNA SYNTHETASE"/>
    <property type="match status" value="1"/>
</dbReference>
<dbReference type="Pfam" id="PF08264">
    <property type="entry name" value="Anticodon_1"/>
    <property type="match status" value="1"/>
</dbReference>
<dbReference type="Pfam" id="PF19302">
    <property type="entry name" value="DUF5915"/>
    <property type="match status" value="1"/>
</dbReference>
<dbReference type="Pfam" id="PF00133">
    <property type="entry name" value="tRNA-synt_1"/>
    <property type="match status" value="1"/>
</dbReference>
<dbReference type="PRINTS" id="PR00984">
    <property type="entry name" value="TRNASYNTHILE"/>
</dbReference>
<dbReference type="SUPFAM" id="SSF47323">
    <property type="entry name" value="Anticodon-binding domain of a subclass of class I aminoacyl-tRNA synthetases"/>
    <property type="match status" value="1"/>
</dbReference>
<dbReference type="SUPFAM" id="SSF52374">
    <property type="entry name" value="Nucleotidylyl transferase"/>
    <property type="match status" value="1"/>
</dbReference>
<dbReference type="SUPFAM" id="SSF50677">
    <property type="entry name" value="ValRS/IleRS/LeuRS editing domain"/>
    <property type="match status" value="1"/>
</dbReference>
<dbReference type="PROSITE" id="PS00178">
    <property type="entry name" value="AA_TRNA_LIGASE_I"/>
    <property type="match status" value="1"/>
</dbReference>
<gene>
    <name type="ordered locus">ECU11_1100</name>
</gene>
<organism>
    <name type="scientific">Encephalitozoon cuniculi (strain GB-M1)</name>
    <name type="common">Microsporidian parasite</name>
    <dbReference type="NCBI Taxonomy" id="284813"/>
    <lineage>
        <taxon>Eukaryota</taxon>
        <taxon>Fungi</taxon>
        <taxon>Fungi incertae sedis</taxon>
        <taxon>Microsporidia</taxon>
        <taxon>Unikaryonidae</taxon>
        <taxon>Encephalitozoon</taxon>
    </lineage>
</organism>
<feature type="chain" id="PRO_0000388378" description="Probable isoleucine--tRNA ligase, cytoplasmic">
    <location>
        <begin position="1"/>
        <end position="1017"/>
    </location>
</feature>
<feature type="short sequence motif" description="'HIGH' region" evidence="1">
    <location>
        <begin position="45"/>
        <end position="55"/>
    </location>
</feature>
<feature type="short sequence motif" description="'KMSKS' region" evidence="1">
    <location>
        <begin position="609"/>
        <end position="613"/>
    </location>
</feature>
<feature type="binding site" evidence="1">
    <location>
        <position position="612"/>
    </location>
    <ligand>
        <name>ATP</name>
        <dbReference type="ChEBI" id="CHEBI:30616"/>
    </ligand>
</feature>
<accession>Q8SQV6</accession>
<proteinExistence type="inferred from homology"/>
<evidence type="ECO:0000250" key="1"/>
<evidence type="ECO:0000305" key="2"/>